<gene>
    <name evidence="1" type="primary">ubiE</name>
    <name type="ordered locus">LHK_00595</name>
</gene>
<comment type="function">
    <text evidence="1">Methyltransferase required for the conversion of demethylmenaquinol (DMKH2) to menaquinol (MKH2) and the conversion of 2-polyprenyl-6-methoxy-1,4-benzoquinol (DDMQH2) to 2-polyprenyl-3-methyl-6-methoxy-1,4-benzoquinol (DMQH2).</text>
</comment>
<comment type="catalytic activity">
    <reaction evidence="1">
        <text>a 2-demethylmenaquinol + S-adenosyl-L-methionine = a menaquinol + S-adenosyl-L-homocysteine + H(+)</text>
        <dbReference type="Rhea" id="RHEA:42640"/>
        <dbReference type="Rhea" id="RHEA-COMP:9539"/>
        <dbReference type="Rhea" id="RHEA-COMP:9563"/>
        <dbReference type="ChEBI" id="CHEBI:15378"/>
        <dbReference type="ChEBI" id="CHEBI:18151"/>
        <dbReference type="ChEBI" id="CHEBI:55437"/>
        <dbReference type="ChEBI" id="CHEBI:57856"/>
        <dbReference type="ChEBI" id="CHEBI:59789"/>
        <dbReference type="EC" id="2.1.1.163"/>
    </reaction>
</comment>
<comment type="catalytic activity">
    <reaction evidence="1">
        <text>a 2-methoxy-6-(all-trans-polyprenyl)benzene-1,4-diol + S-adenosyl-L-methionine = a 5-methoxy-2-methyl-3-(all-trans-polyprenyl)benzene-1,4-diol + S-adenosyl-L-homocysteine + H(+)</text>
        <dbReference type="Rhea" id="RHEA:28286"/>
        <dbReference type="Rhea" id="RHEA-COMP:10858"/>
        <dbReference type="Rhea" id="RHEA-COMP:10859"/>
        <dbReference type="ChEBI" id="CHEBI:15378"/>
        <dbReference type="ChEBI" id="CHEBI:57856"/>
        <dbReference type="ChEBI" id="CHEBI:59789"/>
        <dbReference type="ChEBI" id="CHEBI:84166"/>
        <dbReference type="ChEBI" id="CHEBI:84167"/>
        <dbReference type="EC" id="2.1.1.201"/>
    </reaction>
</comment>
<comment type="pathway">
    <text evidence="1">Quinol/quinone metabolism; menaquinone biosynthesis; menaquinol from 1,4-dihydroxy-2-naphthoate: step 2/2.</text>
</comment>
<comment type="pathway">
    <text evidence="1">Cofactor biosynthesis; ubiquinone biosynthesis.</text>
</comment>
<comment type="similarity">
    <text evidence="1">Belongs to the class I-like SAM-binding methyltransferase superfamily. MenG/UbiE family.</text>
</comment>
<name>UBIE_LARHH</name>
<organism>
    <name type="scientific">Laribacter hongkongensis (strain HLHK9)</name>
    <dbReference type="NCBI Taxonomy" id="557598"/>
    <lineage>
        <taxon>Bacteria</taxon>
        <taxon>Pseudomonadati</taxon>
        <taxon>Pseudomonadota</taxon>
        <taxon>Betaproteobacteria</taxon>
        <taxon>Neisseriales</taxon>
        <taxon>Aquaspirillaceae</taxon>
        <taxon>Laribacter</taxon>
    </lineage>
</organism>
<protein>
    <recommendedName>
        <fullName evidence="1">Ubiquinone/menaquinone biosynthesis C-methyltransferase UbiE</fullName>
        <ecNumber evidence="1">2.1.1.163</ecNumber>
        <ecNumber evidence="1">2.1.1.201</ecNumber>
    </recommendedName>
    <alternativeName>
        <fullName evidence="1">2-methoxy-6-polyprenyl-1,4-benzoquinol methylase</fullName>
    </alternativeName>
    <alternativeName>
        <fullName evidence="1">Demethylmenaquinone methyltransferase</fullName>
    </alternativeName>
</protein>
<accession>C1DCV3</accession>
<proteinExistence type="inferred from homology"/>
<dbReference type="EC" id="2.1.1.163" evidence="1"/>
<dbReference type="EC" id="2.1.1.201" evidence="1"/>
<dbReference type="EMBL" id="CP001154">
    <property type="protein sequence ID" value="ACO73588.1"/>
    <property type="molecule type" value="Genomic_DNA"/>
</dbReference>
<dbReference type="RefSeq" id="WP_012696080.1">
    <property type="nucleotide sequence ID" value="NC_012559.1"/>
</dbReference>
<dbReference type="SMR" id="C1DCV3"/>
<dbReference type="STRING" id="557598.LHK_00595"/>
<dbReference type="KEGG" id="lhk:LHK_00595"/>
<dbReference type="eggNOG" id="COG2226">
    <property type="taxonomic scope" value="Bacteria"/>
</dbReference>
<dbReference type="HOGENOM" id="CLU_037990_0_0_4"/>
<dbReference type="UniPathway" id="UPA00079">
    <property type="reaction ID" value="UER00169"/>
</dbReference>
<dbReference type="UniPathway" id="UPA00232"/>
<dbReference type="Proteomes" id="UP000002010">
    <property type="component" value="Chromosome"/>
</dbReference>
<dbReference type="GO" id="GO:0008425">
    <property type="term" value="F:2-methoxy-6-polyprenyl-1,4-benzoquinol methyltransferase activity"/>
    <property type="evidence" value="ECO:0007669"/>
    <property type="project" value="UniProtKB-UniRule"/>
</dbReference>
<dbReference type="GO" id="GO:0043770">
    <property type="term" value="F:demethylmenaquinone methyltransferase activity"/>
    <property type="evidence" value="ECO:0007669"/>
    <property type="project" value="UniProtKB-UniRule"/>
</dbReference>
<dbReference type="GO" id="GO:0009060">
    <property type="term" value="P:aerobic respiration"/>
    <property type="evidence" value="ECO:0007669"/>
    <property type="project" value="UniProtKB-UniRule"/>
</dbReference>
<dbReference type="GO" id="GO:0009234">
    <property type="term" value="P:menaquinone biosynthetic process"/>
    <property type="evidence" value="ECO:0007669"/>
    <property type="project" value="UniProtKB-UniRule"/>
</dbReference>
<dbReference type="GO" id="GO:0032259">
    <property type="term" value="P:methylation"/>
    <property type="evidence" value="ECO:0007669"/>
    <property type="project" value="UniProtKB-KW"/>
</dbReference>
<dbReference type="CDD" id="cd02440">
    <property type="entry name" value="AdoMet_MTases"/>
    <property type="match status" value="1"/>
</dbReference>
<dbReference type="Gene3D" id="3.40.50.150">
    <property type="entry name" value="Vaccinia Virus protein VP39"/>
    <property type="match status" value="1"/>
</dbReference>
<dbReference type="HAMAP" id="MF_01813">
    <property type="entry name" value="MenG_UbiE_methyltr"/>
    <property type="match status" value="1"/>
</dbReference>
<dbReference type="InterPro" id="IPR029063">
    <property type="entry name" value="SAM-dependent_MTases_sf"/>
</dbReference>
<dbReference type="InterPro" id="IPR004033">
    <property type="entry name" value="UbiE/COQ5_MeTrFase"/>
</dbReference>
<dbReference type="InterPro" id="IPR023576">
    <property type="entry name" value="UbiE/COQ5_MeTrFase_CS"/>
</dbReference>
<dbReference type="NCBIfam" id="TIGR01934">
    <property type="entry name" value="MenG_MenH_UbiE"/>
    <property type="match status" value="1"/>
</dbReference>
<dbReference type="NCBIfam" id="NF001240">
    <property type="entry name" value="PRK00216.1-1"/>
    <property type="match status" value="1"/>
</dbReference>
<dbReference type="PANTHER" id="PTHR43591:SF24">
    <property type="entry name" value="2-METHOXY-6-POLYPRENYL-1,4-BENZOQUINOL METHYLASE, MITOCHONDRIAL"/>
    <property type="match status" value="1"/>
</dbReference>
<dbReference type="PANTHER" id="PTHR43591">
    <property type="entry name" value="METHYLTRANSFERASE"/>
    <property type="match status" value="1"/>
</dbReference>
<dbReference type="Pfam" id="PF01209">
    <property type="entry name" value="Ubie_methyltran"/>
    <property type="match status" value="1"/>
</dbReference>
<dbReference type="SUPFAM" id="SSF53335">
    <property type="entry name" value="S-adenosyl-L-methionine-dependent methyltransferases"/>
    <property type="match status" value="1"/>
</dbReference>
<dbReference type="PROSITE" id="PS51608">
    <property type="entry name" value="SAM_MT_UBIE"/>
    <property type="match status" value="1"/>
</dbReference>
<dbReference type="PROSITE" id="PS01183">
    <property type="entry name" value="UBIE_1"/>
    <property type="match status" value="1"/>
</dbReference>
<dbReference type="PROSITE" id="PS01184">
    <property type="entry name" value="UBIE_2"/>
    <property type="match status" value="1"/>
</dbReference>
<evidence type="ECO:0000255" key="1">
    <source>
        <dbReference type="HAMAP-Rule" id="MF_01813"/>
    </source>
</evidence>
<sequence length="244" mass="27198">MDKTTHFGFKTVNEDDKAGRVAEVFHSVAKKYDVMNDLMSGGLHRIWKHFTLSTAGVRPGMKVLDIAGGTGDLARGWKKRVGKTGEVWLTDINSSMLTVGRDRLLDEGMILPVAIADAEKLPFPDSHFDLVSVAFGLRNMTHKDQALKEMCRVLKPGGKLLVLEFSKVWTPLKPVYDLYSFKALPLMGKLVARDADSYQYLAESIRMHPDQDTLKDMMLEAGFGKVDYHNLSAGVVALHKGYKL</sequence>
<reference key="1">
    <citation type="journal article" date="2009" name="PLoS Genet.">
        <title>The complete genome and proteome of Laribacter hongkongensis reveal potential mechanisms for adaptations to different temperatures and habitats.</title>
        <authorList>
            <person name="Woo P.C.Y."/>
            <person name="Lau S.K.P."/>
            <person name="Tse H."/>
            <person name="Teng J.L.L."/>
            <person name="Curreem S.O."/>
            <person name="Tsang A.K.L."/>
            <person name="Fan R.Y.Y."/>
            <person name="Wong G.K.M."/>
            <person name="Huang Y."/>
            <person name="Loman N.J."/>
            <person name="Snyder L.A.S."/>
            <person name="Cai J.J."/>
            <person name="Huang J.-D."/>
            <person name="Mak W."/>
            <person name="Pallen M.J."/>
            <person name="Lok S."/>
            <person name="Yuen K.-Y."/>
        </authorList>
    </citation>
    <scope>NUCLEOTIDE SEQUENCE [LARGE SCALE GENOMIC DNA]</scope>
    <source>
        <strain>HLHK9</strain>
    </source>
</reference>
<keyword id="KW-0474">Menaquinone biosynthesis</keyword>
<keyword id="KW-0489">Methyltransferase</keyword>
<keyword id="KW-1185">Reference proteome</keyword>
<keyword id="KW-0949">S-adenosyl-L-methionine</keyword>
<keyword id="KW-0808">Transferase</keyword>
<keyword id="KW-0831">Ubiquinone biosynthesis</keyword>
<feature type="chain" id="PRO_1000187774" description="Ubiquinone/menaquinone biosynthesis C-methyltransferase UbiE">
    <location>
        <begin position="1"/>
        <end position="244"/>
    </location>
</feature>
<feature type="binding site" evidence="1">
    <location>
        <position position="70"/>
    </location>
    <ligand>
        <name>S-adenosyl-L-methionine</name>
        <dbReference type="ChEBI" id="CHEBI:59789"/>
    </ligand>
</feature>
<feature type="binding site" evidence="1">
    <location>
        <position position="91"/>
    </location>
    <ligand>
        <name>S-adenosyl-L-methionine</name>
        <dbReference type="ChEBI" id="CHEBI:59789"/>
    </ligand>
</feature>
<feature type="binding site" evidence="1">
    <location>
        <begin position="117"/>
        <end position="118"/>
    </location>
    <ligand>
        <name>S-adenosyl-L-methionine</name>
        <dbReference type="ChEBI" id="CHEBI:59789"/>
    </ligand>
</feature>